<evidence type="ECO:0000250" key="1">
    <source>
        <dbReference type="UniProtKB" id="Q2FXT0"/>
    </source>
</evidence>
<evidence type="ECO:0000255" key="2">
    <source>
        <dbReference type="HAMAP-Rule" id="MF_00539"/>
    </source>
</evidence>
<evidence type="ECO:0000305" key="3"/>
<feature type="propeptide" id="PRO_0000459891" evidence="1">
    <location>
        <begin position="1"/>
        <end position="9"/>
    </location>
</feature>
<feature type="chain" id="PRO_1000146527" description="Large ribosomal subunit protein bL27">
    <location>
        <begin position="10"/>
        <end position="98"/>
    </location>
</feature>
<keyword id="KW-0687">Ribonucleoprotein</keyword>
<keyword id="KW-0689">Ribosomal protein</keyword>
<dbReference type="EMBL" id="CP001336">
    <property type="protein sequence ID" value="ACL22341.1"/>
    <property type="molecule type" value="Genomic_DNA"/>
</dbReference>
<dbReference type="RefSeq" id="WP_005816541.1">
    <property type="nucleotide sequence ID" value="NC_011830.1"/>
</dbReference>
<dbReference type="SMR" id="B8FUS1"/>
<dbReference type="KEGG" id="dhd:Dhaf_4336"/>
<dbReference type="HOGENOM" id="CLU_095424_4_0_9"/>
<dbReference type="Proteomes" id="UP000007726">
    <property type="component" value="Chromosome"/>
</dbReference>
<dbReference type="GO" id="GO:0022625">
    <property type="term" value="C:cytosolic large ribosomal subunit"/>
    <property type="evidence" value="ECO:0007669"/>
    <property type="project" value="TreeGrafter"/>
</dbReference>
<dbReference type="GO" id="GO:0003735">
    <property type="term" value="F:structural constituent of ribosome"/>
    <property type="evidence" value="ECO:0007669"/>
    <property type="project" value="InterPro"/>
</dbReference>
<dbReference type="GO" id="GO:0006412">
    <property type="term" value="P:translation"/>
    <property type="evidence" value="ECO:0007669"/>
    <property type="project" value="UniProtKB-UniRule"/>
</dbReference>
<dbReference type="FunFam" id="2.40.50.100:FF:000004">
    <property type="entry name" value="50S ribosomal protein L27"/>
    <property type="match status" value="1"/>
</dbReference>
<dbReference type="Gene3D" id="2.40.50.100">
    <property type="match status" value="1"/>
</dbReference>
<dbReference type="HAMAP" id="MF_00539">
    <property type="entry name" value="Ribosomal_bL27"/>
    <property type="match status" value="1"/>
</dbReference>
<dbReference type="InterPro" id="IPR001684">
    <property type="entry name" value="Ribosomal_bL27"/>
</dbReference>
<dbReference type="InterPro" id="IPR018261">
    <property type="entry name" value="Ribosomal_bL27_CS"/>
</dbReference>
<dbReference type="NCBIfam" id="TIGR00062">
    <property type="entry name" value="L27"/>
    <property type="match status" value="1"/>
</dbReference>
<dbReference type="PANTHER" id="PTHR15893:SF0">
    <property type="entry name" value="LARGE RIBOSOMAL SUBUNIT PROTEIN BL27M"/>
    <property type="match status" value="1"/>
</dbReference>
<dbReference type="PANTHER" id="PTHR15893">
    <property type="entry name" value="RIBOSOMAL PROTEIN L27"/>
    <property type="match status" value="1"/>
</dbReference>
<dbReference type="Pfam" id="PF01016">
    <property type="entry name" value="Ribosomal_L27"/>
    <property type="match status" value="1"/>
</dbReference>
<dbReference type="PRINTS" id="PR00063">
    <property type="entry name" value="RIBOSOMALL27"/>
</dbReference>
<dbReference type="SUPFAM" id="SSF110324">
    <property type="entry name" value="Ribosomal L27 protein-like"/>
    <property type="match status" value="1"/>
</dbReference>
<dbReference type="PROSITE" id="PS00831">
    <property type="entry name" value="RIBOSOMAL_L27"/>
    <property type="match status" value="1"/>
</dbReference>
<reference key="1">
    <citation type="journal article" date="2012" name="BMC Microbiol.">
        <title>Genome sequence of Desulfitobacterium hafniense DCB-2, a Gram-positive anaerobe capable of dehalogenation and metal reduction.</title>
        <authorList>
            <person name="Kim S.H."/>
            <person name="Harzman C."/>
            <person name="Davis J.K."/>
            <person name="Hutcheson R."/>
            <person name="Broderick J.B."/>
            <person name="Marsh T.L."/>
            <person name="Tiedje J.M."/>
        </authorList>
    </citation>
    <scope>NUCLEOTIDE SEQUENCE [LARGE SCALE GENOMIC DNA]</scope>
    <source>
        <strain>DSM 10664 / DCB-2</strain>
    </source>
</reference>
<gene>
    <name evidence="2" type="primary">rpmA</name>
    <name type="ordered locus">Dhaf_4336</name>
</gene>
<protein>
    <recommendedName>
        <fullName evidence="2">Large ribosomal subunit protein bL27</fullName>
    </recommendedName>
    <alternativeName>
        <fullName evidence="3">50S ribosomal protein L27</fullName>
    </alternativeName>
</protein>
<sequence length="98" mass="10922">MLKMNLQLFAHKKGVGSSRNGRDSNAQRLGVKRGDGQFVTAGNIIVRQRGTKFHPGKNCGLGKDDTLFATIDGYVKFERKDRSRKQVSIYPERQAAQA</sequence>
<name>RL27_DESHD</name>
<comment type="PTM">
    <text evidence="1">The N-terminus is cleaved by ribosomal processing cysteine protease Prp.</text>
</comment>
<comment type="similarity">
    <text evidence="2">Belongs to the bacterial ribosomal protein bL27 family.</text>
</comment>
<organism>
    <name type="scientific">Desulfitobacterium hafniense (strain DSM 10664 / DCB-2)</name>
    <dbReference type="NCBI Taxonomy" id="272564"/>
    <lineage>
        <taxon>Bacteria</taxon>
        <taxon>Bacillati</taxon>
        <taxon>Bacillota</taxon>
        <taxon>Clostridia</taxon>
        <taxon>Eubacteriales</taxon>
        <taxon>Desulfitobacteriaceae</taxon>
        <taxon>Desulfitobacterium</taxon>
    </lineage>
</organism>
<accession>B8FUS1</accession>
<proteinExistence type="inferred from homology"/>